<reference key="1">
    <citation type="journal article" date="2002" name="Mol. Biol. Evol.">
        <title>The plastid chromosome of Atropa belladonna and its comparison with that of Nicotiana tabacum: the role of RNA editing in generating divergence in the process of plant speciation.</title>
        <authorList>
            <person name="Schmitz-Linneweber C."/>
            <person name="Regel R."/>
            <person name="Du T.G."/>
            <person name="Hupfer H."/>
            <person name="Herrmann R.G."/>
            <person name="Maier R.M."/>
        </authorList>
    </citation>
    <scope>NUCLEOTIDE SEQUENCE [LARGE SCALE GENOMIC DNA]</scope>
    <source>
        <strain>cv. Ab5p(kan)</strain>
    </source>
</reference>
<organism>
    <name type="scientific">Atropa belladonna</name>
    <name type="common">Belladonna</name>
    <name type="synonym">Deadly nightshade</name>
    <dbReference type="NCBI Taxonomy" id="33113"/>
    <lineage>
        <taxon>Eukaryota</taxon>
        <taxon>Viridiplantae</taxon>
        <taxon>Streptophyta</taxon>
        <taxon>Embryophyta</taxon>
        <taxon>Tracheophyta</taxon>
        <taxon>Spermatophyta</taxon>
        <taxon>Magnoliopsida</taxon>
        <taxon>eudicotyledons</taxon>
        <taxon>Gunneridae</taxon>
        <taxon>Pentapetalae</taxon>
        <taxon>asterids</taxon>
        <taxon>lamiids</taxon>
        <taxon>Solanales</taxon>
        <taxon>Solanaceae</taxon>
        <taxon>Solanoideae</taxon>
        <taxon>Hyoscyameae</taxon>
        <taxon>Atropa</taxon>
    </lineage>
</organism>
<comment type="function">
    <text evidence="1">One of the components of the core complex of photosystem II (PSII). PSII is a light-driven water:plastoquinone oxidoreductase that uses light energy to abstract electrons from H(2)O, generating O(2) and a proton gradient subsequently used for ATP formation. It consists of a core antenna complex that captures photons, and an electron transfer chain that converts photonic excitation into a charge separation.</text>
</comment>
<comment type="subunit">
    <text evidence="1">PSII is composed of 1 copy each of membrane proteins PsbA, PsbB, PsbC, PsbD, PsbE, PsbF, PsbH, PsbI, PsbJ, PsbK, PsbL, PsbM, PsbT, PsbX, PsbY, PsbZ, Psb30/Ycf12, at least 3 peripheral proteins of the oxygen-evolving complex and a large number of cofactors. It forms dimeric complexes.</text>
</comment>
<comment type="subcellular location">
    <subcellularLocation>
        <location evidence="1">Plastid</location>
        <location evidence="1">Chloroplast thylakoid membrane</location>
        <topology evidence="1">Single-pass membrane protein</topology>
    </subcellularLocation>
</comment>
<comment type="similarity">
    <text evidence="1">Belongs to the PsbJ family.</text>
</comment>
<protein>
    <recommendedName>
        <fullName evidence="1">Photosystem II reaction center protein J</fullName>
        <shortName evidence="1">PSII-J</shortName>
    </recommendedName>
</protein>
<name>PSBJ_ATRBE</name>
<evidence type="ECO:0000255" key="1">
    <source>
        <dbReference type="HAMAP-Rule" id="MF_01305"/>
    </source>
</evidence>
<proteinExistence type="inferred from homology"/>
<accession>P69690</accession>
<accession>P12190</accession>
<gene>
    <name evidence="1" type="primary">psbJ</name>
</gene>
<sequence length="40" mass="4131">MADTTGRIPLWIIGTVAGILVIGLIGIFFYGSYSGLGSSL</sequence>
<dbReference type="EMBL" id="AJ316582">
    <property type="protein sequence ID" value="CAC88058.1"/>
    <property type="molecule type" value="Genomic_DNA"/>
</dbReference>
<dbReference type="RefSeq" id="NP_783246.1">
    <property type="nucleotide sequence ID" value="NC_004561.1"/>
</dbReference>
<dbReference type="SMR" id="P69690"/>
<dbReference type="GeneID" id="806519"/>
<dbReference type="GO" id="GO:0009535">
    <property type="term" value="C:chloroplast thylakoid membrane"/>
    <property type="evidence" value="ECO:0007669"/>
    <property type="project" value="UniProtKB-SubCell"/>
</dbReference>
<dbReference type="GO" id="GO:0009539">
    <property type="term" value="C:photosystem II reaction center"/>
    <property type="evidence" value="ECO:0007669"/>
    <property type="project" value="InterPro"/>
</dbReference>
<dbReference type="GO" id="GO:0015979">
    <property type="term" value="P:photosynthesis"/>
    <property type="evidence" value="ECO:0007669"/>
    <property type="project" value="UniProtKB-UniRule"/>
</dbReference>
<dbReference type="Gene3D" id="6.10.250.2070">
    <property type="match status" value="1"/>
</dbReference>
<dbReference type="HAMAP" id="MF_01305">
    <property type="entry name" value="PSII_PsbJ"/>
    <property type="match status" value="1"/>
</dbReference>
<dbReference type="InterPro" id="IPR002682">
    <property type="entry name" value="PSII_PsbJ"/>
</dbReference>
<dbReference type="InterPro" id="IPR037267">
    <property type="entry name" value="PSII_PsbJ_sf"/>
</dbReference>
<dbReference type="NCBIfam" id="NF002722">
    <property type="entry name" value="PRK02565.1"/>
    <property type="match status" value="1"/>
</dbReference>
<dbReference type="PANTHER" id="PTHR34812">
    <property type="entry name" value="PHOTOSYSTEM II REACTION CENTER PROTEIN J"/>
    <property type="match status" value="1"/>
</dbReference>
<dbReference type="PANTHER" id="PTHR34812:SF3">
    <property type="entry name" value="PHOTOSYSTEM II REACTION CENTER PROTEIN J"/>
    <property type="match status" value="1"/>
</dbReference>
<dbReference type="Pfam" id="PF01788">
    <property type="entry name" value="PsbJ"/>
    <property type="match status" value="1"/>
</dbReference>
<dbReference type="SUPFAM" id="SSF161021">
    <property type="entry name" value="Photosystem II reaction center protein J, PsbJ"/>
    <property type="match status" value="1"/>
</dbReference>
<keyword id="KW-0150">Chloroplast</keyword>
<keyword id="KW-0472">Membrane</keyword>
<keyword id="KW-0602">Photosynthesis</keyword>
<keyword id="KW-0604">Photosystem II</keyword>
<keyword id="KW-0934">Plastid</keyword>
<keyword id="KW-0674">Reaction center</keyword>
<keyword id="KW-0793">Thylakoid</keyword>
<keyword id="KW-0812">Transmembrane</keyword>
<keyword id="KW-1133">Transmembrane helix</keyword>
<geneLocation type="chloroplast"/>
<feature type="chain" id="PRO_0000216580" description="Photosystem II reaction center protein J">
    <location>
        <begin position="1"/>
        <end position="40"/>
    </location>
</feature>
<feature type="transmembrane region" description="Helical" evidence="1">
    <location>
        <begin position="8"/>
        <end position="28"/>
    </location>
</feature>